<sequence length="397" mass="43307">MKQFLVVLLILSFVHGIIRVPLKRQKSMRKILKEKGKLSHLWTKQGNEFLQLSDSCSSPETASEPLMNYLDVEYFGQISIGTPPQQFTVIFDTGSSNLWVPSIYCTSQACTKHNRYRPSESTTYVSNGEAFFIQYGTGNLTGILGIDQVTVQGITVQSQTFAESVSEPGSTFQDSNFDGILGLAYPNLAVDNCIPVFDNMIAQNLVELPLFGVYMNRDPNSADGGELVLGGFDTSRFSGQLNWVPITVQGYWQIQVDSIQVAGQVIFCSDGCQAIVDTGTSLITGPSGDIEQLQNYIGVTNTNGEYGVSCSTLSLMPSVTFTINGLDYSLTPEQYMLEDGGGYCSSGFQGLDISPPSGPLWILGDVFIGQYYSVFDRGNNRVGFAPVVFYETTTNGA</sequence>
<name>CATE_AQUCT</name>
<organism evidence="9">
    <name type="scientific">Aquarana catesbeiana</name>
    <name type="common">American bullfrog</name>
    <name type="synonym">Rana catesbeiana</name>
    <dbReference type="NCBI Taxonomy" id="8400"/>
    <lineage>
        <taxon>Eukaryota</taxon>
        <taxon>Metazoa</taxon>
        <taxon>Chordata</taxon>
        <taxon>Craniata</taxon>
        <taxon>Vertebrata</taxon>
        <taxon>Euteleostomi</taxon>
        <taxon>Amphibia</taxon>
        <taxon>Batrachia</taxon>
        <taxon>Anura</taxon>
        <taxon>Neobatrachia</taxon>
        <taxon>Ranoidea</taxon>
        <taxon>Ranidae</taxon>
        <taxon>Aquarana</taxon>
    </lineage>
</organism>
<proteinExistence type="evidence at protein level"/>
<gene>
    <name type="primary">CTSE</name>
    <name type="synonym">CE</name>
</gene>
<dbReference type="EC" id="3.4.23.34"/>
<dbReference type="EMBL" id="AB093036">
    <property type="protein sequence ID" value="BAC75398.1"/>
    <property type="molecule type" value="mRNA"/>
</dbReference>
<dbReference type="SMR" id="Q800A0"/>
<dbReference type="MEROPS" id="A01.010"/>
<dbReference type="GlyCosmos" id="Q800A0">
    <property type="glycosylation" value="1 site, No reported glycans"/>
</dbReference>
<dbReference type="GO" id="GO:0005768">
    <property type="term" value="C:endosome"/>
    <property type="evidence" value="ECO:0000250"/>
    <property type="project" value="UniProtKB"/>
</dbReference>
<dbReference type="GO" id="GO:0004190">
    <property type="term" value="F:aspartic-type endopeptidase activity"/>
    <property type="evidence" value="ECO:0000250"/>
    <property type="project" value="UniProtKB"/>
</dbReference>
<dbReference type="GO" id="GO:0019886">
    <property type="term" value="P:antigen processing and presentation of exogenous peptide antigen via MHC class II"/>
    <property type="evidence" value="ECO:0000250"/>
    <property type="project" value="UniProtKB"/>
</dbReference>
<dbReference type="GO" id="GO:0006508">
    <property type="term" value="P:proteolysis"/>
    <property type="evidence" value="ECO:0007669"/>
    <property type="project" value="UniProtKB-KW"/>
</dbReference>
<dbReference type="FunFam" id="2.40.70.10:FF:000006">
    <property type="entry name" value="Cathepsin E"/>
    <property type="match status" value="1"/>
</dbReference>
<dbReference type="FunFam" id="2.40.70.10:FF:000004">
    <property type="entry name" value="Pepsin A"/>
    <property type="match status" value="1"/>
</dbReference>
<dbReference type="Gene3D" id="6.10.140.60">
    <property type="match status" value="1"/>
</dbReference>
<dbReference type="Gene3D" id="2.40.70.10">
    <property type="entry name" value="Acid Proteases"/>
    <property type="match status" value="2"/>
</dbReference>
<dbReference type="InterPro" id="IPR001461">
    <property type="entry name" value="Aspartic_peptidase_A1"/>
</dbReference>
<dbReference type="InterPro" id="IPR001969">
    <property type="entry name" value="Aspartic_peptidase_AS"/>
</dbReference>
<dbReference type="InterPro" id="IPR012848">
    <property type="entry name" value="Aspartic_peptidase_N"/>
</dbReference>
<dbReference type="InterPro" id="IPR033121">
    <property type="entry name" value="PEPTIDASE_A1"/>
</dbReference>
<dbReference type="InterPro" id="IPR021109">
    <property type="entry name" value="Peptidase_aspartic_dom_sf"/>
</dbReference>
<dbReference type="PANTHER" id="PTHR47966">
    <property type="entry name" value="BETA-SITE APP-CLEAVING ENZYME, ISOFORM A-RELATED"/>
    <property type="match status" value="1"/>
</dbReference>
<dbReference type="PANTHER" id="PTHR47966:SF26">
    <property type="entry name" value="CATHEPSIN E"/>
    <property type="match status" value="1"/>
</dbReference>
<dbReference type="Pfam" id="PF07966">
    <property type="entry name" value="A1_Propeptide"/>
    <property type="match status" value="1"/>
</dbReference>
<dbReference type="Pfam" id="PF00026">
    <property type="entry name" value="Asp"/>
    <property type="match status" value="1"/>
</dbReference>
<dbReference type="PRINTS" id="PR00792">
    <property type="entry name" value="PEPSIN"/>
</dbReference>
<dbReference type="SUPFAM" id="SSF50630">
    <property type="entry name" value="Acid proteases"/>
    <property type="match status" value="1"/>
</dbReference>
<dbReference type="PROSITE" id="PS00141">
    <property type="entry name" value="ASP_PROTEASE"/>
    <property type="match status" value="2"/>
</dbReference>
<dbReference type="PROSITE" id="PS51767">
    <property type="entry name" value="PEPTIDASE_A1"/>
    <property type="match status" value="1"/>
</dbReference>
<keyword id="KW-0064">Aspartyl protease</keyword>
<keyword id="KW-0903">Direct protein sequencing</keyword>
<keyword id="KW-1015">Disulfide bond</keyword>
<keyword id="KW-0967">Endosome</keyword>
<keyword id="KW-0325">Glycoprotein</keyword>
<keyword id="KW-0378">Hydrolase</keyword>
<keyword id="KW-0645">Protease</keyword>
<keyword id="KW-0732">Signal</keyword>
<keyword id="KW-0865">Zymogen</keyword>
<evidence type="ECO:0000250" key="1"/>
<evidence type="ECO:0000250" key="2">
    <source>
        <dbReference type="UniProtKB" id="P00790"/>
    </source>
</evidence>
<evidence type="ECO:0000250" key="3">
    <source>
        <dbReference type="UniProtKB" id="P14091"/>
    </source>
</evidence>
<evidence type="ECO:0000250" key="4">
    <source>
        <dbReference type="UniProtKB" id="Q805F3"/>
    </source>
</evidence>
<evidence type="ECO:0000255" key="5">
    <source>
        <dbReference type="PROSITE-ProRule" id="PRU01103"/>
    </source>
</evidence>
<evidence type="ECO:0000255" key="6">
    <source>
        <dbReference type="PROSITE-ProRule" id="PRU10094"/>
    </source>
</evidence>
<evidence type="ECO:0000269" key="7">
    <source>
    </source>
</evidence>
<evidence type="ECO:0000305" key="8"/>
<evidence type="ECO:0000312" key="9">
    <source>
        <dbReference type="EMBL" id="BAC75398.1"/>
    </source>
</evidence>
<reference evidence="8" key="1">
    <citation type="journal article" date="2003" name="Comp. Biochem. Physiol.">
        <title>Molecular cloning of preprocathepsin E cDNA from the stomach of bullfrog Rana catesbeiana.</title>
        <authorList>
            <person name="Inokuchi T."/>
            <person name="Ikuzawa M."/>
            <person name="Mineta T."/>
            <person name="Yasumasu S."/>
            <person name="Kobayashi K."/>
        </authorList>
    </citation>
    <scope>NUCLEOTIDE SEQUENCE [MRNA]</scope>
    <scope>PROTEIN SEQUENCE OF 17-42 AND 50-69</scope>
    <scope>TISSUE SPECIFICITY</scope>
    <scope>GLYCOSYLATION</scope>
    <source>
        <tissue evidence="9">Stomach</tissue>
    </source>
</reference>
<protein>
    <recommendedName>
        <fullName>Cathepsin E</fullName>
        <ecNumber>3.4.23.34</ecNumber>
    </recommendedName>
</protein>
<accession>Q800A0</accession>
<feature type="signal peptide" evidence="7">
    <location>
        <begin position="1"/>
        <end position="16"/>
    </location>
</feature>
<feature type="propeptide" id="PRO_0000025982" description="Activation peptide" evidence="7">
    <location>
        <begin position="17"/>
        <end position="49"/>
    </location>
</feature>
<feature type="chain" id="PRO_0000025983" description="Cathepsin E" evidence="7">
    <location>
        <begin position="50"/>
        <end position="397"/>
    </location>
</feature>
<feature type="domain" description="Peptidase A1" evidence="5">
    <location>
        <begin position="74"/>
        <end position="385"/>
    </location>
</feature>
<feature type="active site" evidence="2 6">
    <location>
        <position position="92"/>
    </location>
</feature>
<feature type="active site" evidence="2 6">
    <location>
        <position position="277"/>
    </location>
</feature>
<feature type="glycosylation site" description="N-linked (GlcNAc...) asparagine" evidence="8">
    <location>
        <position position="139"/>
    </location>
</feature>
<feature type="disulfide bond" evidence="2">
    <location>
        <begin position="105"/>
        <end position="110"/>
    </location>
</feature>
<feature type="disulfide bond" evidence="2">
    <location>
        <begin position="268"/>
        <end position="272"/>
    </location>
</feature>
<feature type="disulfide bond" evidence="2">
    <location>
        <begin position="310"/>
        <end position="344"/>
    </location>
</feature>
<comment type="function">
    <text evidence="3">May have a role in immune function. Probably involved in the processing of antigenic peptides during MHC class II-mediated antigen presentation (By similarity).</text>
</comment>
<comment type="catalytic activity">
    <reaction evidence="4">
        <text>Similar to cathepsin D, but slightly broader specificity.</text>
        <dbReference type="EC" id="3.4.23.34"/>
    </reaction>
</comment>
<comment type="subunit">
    <text evidence="4">Homodimer; disulfide-linked.</text>
</comment>
<comment type="subcellular location">
    <subcellularLocation>
        <location evidence="1">Endosome</location>
    </subcellularLocation>
    <text evidence="1">The proenzyme is localized to the endoplasmic reticulum and Golgi apparatus, while the mature enzyme is localized to the endosome.</text>
</comment>
<comment type="tissue specificity">
    <text evidence="7">Found in the larval foregut and adult stomach.</text>
</comment>
<comment type="PTM">
    <text evidence="7">Glycosylated. Contains high mannose-type oligosaccharide.</text>
</comment>
<comment type="similarity">
    <text evidence="8">Belongs to the peptidase A1 family.</text>
</comment>